<sequence>MFPSSDFSFSPSSLFSAYASLTGFLMLFRSMLHDFVPEKLRSYFSSLLDRFFTPKSKYLTVIIDENFGLNRNQVFDAAEMYLRSKIGPETERLRVGKIPKQKHFTISIERGEEILDTFEESEVKWSYVQSENEKGDKVKRYYELTFEKKLRDKVLNSYLTHVVAESEEIKRNLRVVKLYSRDVYASDDDDGMAGGNWGCINLEHPSTFDTLAMDPNAKKKIIDDLERFLKRKEFYKRVGKAWKRGYLLYGPPGTGKSSLIAAMANYLKFDVFDLELSSIYDNGELKRVLLSTTNRSILVIEDIDCNAEVRDREAENQEDEQIKGKVTLSGILNFIDGLWSSFGDERIIVFTTNHKERLDPALLRPGRMDVHINMSYCTGLGFRTLVSNYLGLDGLNHPLCEEIEALVDSTEVTPAELAEELMQDDDTDVVLRGVISFVEKRKVERSKTKKEVSICKATDDDEKQNGSLGCVKKKKKGGKQKGKGKGKGKAKTYLI</sequence>
<accession>Q8GW96</accession>
<accession>Q683K1</accession>
<accession>Q9SI12</accession>
<gene>
    <name evidence="5" type="ordered locus">At2g18193</name>
    <name evidence="4" type="ORF">F8D23</name>
</gene>
<proteinExistence type="evidence at transcript level"/>
<comment type="catalytic activity">
    <reaction evidence="1">
        <text>ATP + H2O = ADP + phosphate + H(+)</text>
        <dbReference type="Rhea" id="RHEA:13065"/>
        <dbReference type="ChEBI" id="CHEBI:15377"/>
        <dbReference type="ChEBI" id="CHEBI:15378"/>
        <dbReference type="ChEBI" id="CHEBI:30616"/>
        <dbReference type="ChEBI" id="CHEBI:43474"/>
        <dbReference type="ChEBI" id="CHEBI:456216"/>
    </reaction>
</comment>
<comment type="cofactor">
    <cofactor evidence="1">
        <name>Mg(2+)</name>
        <dbReference type="ChEBI" id="CHEBI:18420"/>
    </cofactor>
</comment>
<comment type="subcellular location">
    <subcellularLocation>
        <location evidence="2">Membrane</location>
        <topology evidence="2">Single-pass membrane protein</topology>
    </subcellularLocation>
</comment>
<comment type="similarity">
    <text evidence="4">Belongs to the AAA ATPase family. BCS1 subfamily.</text>
</comment>
<comment type="sequence caution" evidence="4">
    <conflict type="erroneous gene model prediction">
        <sequence resource="EMBL-CDS" id="AAD31347"/>
    </conflict>
    <text>The predicted gene At2g18190 has been split into 2 genes: At2g18190 and At2g18193.</text>
</comment>
<keyword id="KW-0067">ATP-binding</keyword>
<keyword id="KW-0378">Hydrolase</keyword>
<keyword id="KW-0460">Magnesium</keyword>
<keyword id="KW-0472">Membrane</keyword>
<keyword id="KW-0547">Nucleotide-binding</keyword>
<keyword id="KW-1185">Reference proteome</keyword>
<keyword id="KW-0812">Transmembrane</keyword>
<keyword id="KW-1133">Transmembrane helix</keyword>
<organism evidence="6">
    <name type="scientific">Arabidopsis thaliana</name>
    <name type="common">Mouse-ear cress</name>
    <dbReference type="NCBI Taxonomy" id="3702"/>
    <lineage>
        <taxon>Eukaryota</taxon>
        <taxon>Viridiplantae</taxon>
        <taxon>Streptophyta</taxon>
        <taxon>Embryophyta</taxon>
        <taxon>Tracheophyta</taxon>
        <taxon>Spermatophyta</taxon>
        <taxon>Magnoliopsida</taxon>
        <taxon>eudicotyledons</taxon>
        <taxon>Gunneridae</taxon>
        <taxon>Pentapetalae</taxon>
        <taxon>rosids</taxon>
        <taxon>malvids</taxon>
        <taxon>Brassicales</taxon>
        <taxon>Brassicaceae</taxon>
        <taxon>Camelineae</taxon>
        <taxon>Arabidopsis</taxon>
    </lineage>
</organism>
<name>AATP3_ARATH</name>
<feature type="chain" id="PRO_0000434705" description="AAA-ATPase At2g18193">
    <location>
        <begin position="1"/>
        <end position="495"/>
    </location>
</feature>
<feature type="transmembrane region" description="Helical" evidence="2">
    <location>
        <begin position="7"/>
        <end position="28"/>
    </location>
</feature>
<feature type="region of interest" description="Disordered" evidence="3">
    <location>
        <begin position="451"/>
        <end position="495"/>
    </location>
</feature>
<feature type="compositionally biased region" description="Basic residues" evidence="3">
    <location>
        <begin position="471"/>
        <end position="495"/>
    </location>
</feature>
<feature type="binding site" evidence="2">
    <location>
        <begin position="250"/>
        <end position="257"/>
    </location>
    <ligand>
        <name>ATP</name>
        <dbReference type="ChEBI" id="CHEBI:30616"/>
    </ligand>
</feature>
<feature type="sequence conflict" description="In Ref. 4; BAD42879." evidence="4" ref="4">
    <original>K</original>
    <variation>R</variation>
    <location>
        <position position="219"/>
    </location>
</feature>
<dbReference type="EC" id="3.6.1.-" evidence="1"/>
<dbReference type="EMBL" id="AC007212">
    <property type="protein sequence ID" value="AAD31347.1"/>
    <property type="status" value="ALT_SEQ"/>
    <property type="molecule type" value="Genomic_DNA"/>
</dbReference>
<dbReference type="EMBL" id="CP002685">
    <property type="protein sequence ID" value="AEC06737.1"/>
    <property type="molecule type" value="Genomic_DNA"/>
</dbReference>
<dbReference type="EMBL" id="AK118992">
    <property type="protein sequence ID" value="BAC43568.1"/>
    <property type="molecule type" value="mRNA"/>
</dbReference>
<dbReference type="EMBL" id="AK175116">
    <property type="protein sequence ID" value="BAD42879.1"/>
    <property type="molecule type" value="mRNA"/>
</dbReference>
<dbReference type="EMBL" id="AK175187">
    <property type="protein sequence ID" value="BAD42950.1"/>
    <property type="molecule type" value="mRNA"/>
</dbReference>
<dbReference type="EMBL" id="AK175325">
    <property type="protein sequence ID" value="BAD43088.1"/>
    <property type="molecule type" value="mRNA"/>
</dbReference>
<dbReference type="EMBL" id="AK176580">
    <property type="protein sequence ID" value="BAD44343.1"/>
    <property type="molecule type" value="mRNA"/>
</dbReference>
<dbReference type="EMBL" id="BT026385">
    <property type="protein sequence ID" value="ABH04492.1"/>
    <property type="molecule type" value="mRNA"/>
</dbReference>
<dbReference type="PIR" id="D84561">
    <property type="entry name" value="D84561"/>
</dbReference>
<dbReference type="RefSeq" id="NP_849972.1">
    <property type="nucleotide sequence ID" value="NM_179641.2"/>
</dbReference>
<dbReference type="SMR" id="Q8GW96"/>
<dbReference type="FunCoup" id="Q8GW96">
    <property type="interactions" value="1573"/>
</dbReference>
<dbReference type="STRING" id="3702.Q8GW96"/>
<dbReference type="SwissPalm" id="Q8GW96"/>
<dbReference type="PaxDb" id="3702-AT2G18193.1"/>
<dbReference type="ProteomicsDB" id="244584"/>
<dbReference type="EnsemblPlants" id="AT2G18193.1">
    <property type="protein sequence ID" value="AT2G18193.1"/>
    <property type="gene ID" value="AT2G18193"/>
</dbReference>
<dbReference type="GeneID" id="816333"/>
<dbReference type="Gramene" id="AT2G18193.1">
    <property type="protein sequence ID" value="AT2G18193.1"/>
    <property type="gene ID" value="AT2G18193"/>
</dbReference>
<dbReference type="KEGG" id="ath:AT2G18193"/>
<dbReference type="Araport" id="AT2G18193"/>
<dbReference type="TAIR" id="AT2G18193"/>
<dbReference type="eggNOG" id="KOG0743">
    <property type="taxonomic scope" value="Eukaryota"/>
</dbReference>
<dbReference type="HOGENOM" id="CLU_010189_0_1_1"/>
<dbReference type="InParanoid" id="Q8GW96"/>
<dbReference type="OMA" id="KEVSICK"/>
<dbReference type="PhylomeDB" id="Q8GW96"/>
<dbReference type="PRO" id="PR:Q8GW96"/>
<dbReference type="Proteomes" id="UP000006548">
    <property type="component" value="Chromosome 2"/>
</dbReference>
<dbReference type="ExpressionAtlas" id="Q8GW96">
    <property type="expression patterns" value="baseline and differential"/>
</dbReference>
<dbReference type="GO" id="GO:0005783">
    <property type="term" value="C:endoplasmic reticulum"/>
    <property type="evidence" value="ECO:0007005"/>
    <property type="project" value="TAIR"/>
</dbReference>
<dbReference type="GO" id="GO:0016020">
    <property type="term" value="C:membrane"/>
    <property type="evidence" value="ECO:0007669"/>
    <property type="project" value="UniProtKB-SubCell"/>
</dbReference>
<dbReference type="GO" id="GO:0005524">
    <property type="term" value="F:ATP binding"/>
    <property type="evidence" value="ECO:0007669"/>
    <property type="project" value="UniProtKB-KW"/>
</dbReference>
<dbReference type="GO" id="GO:0016887">
    <property type="term" value="F:ATP hydrolysis activity"/>
    <property type="evidence" value="ECO:0007669"/>
    <property type="project" value="InterPro"/>
</dbReference>
<dbReference type="GO" id="GO:0006950">
    <property type="term" value="P:response to stress"/>
    <property type="evidence" value="ECO:0007669"/>
    <property type="project" value="UniProtKB-ARBA"/>
</dbReference>
<dbReference type="CDD" id="cd19510">
    <property type="entry name" value="RecA-like_BCS1"/>
    <property type="match status" value="1"/>
</dbReference>
<dbReference type="FunFam" id="3.40.50.300:FF:001122">
    <property type="entry name" value="AAA-ATPase ASD, mitochondrial"/>
    <property type="match status" value="1"/>
</dbReference>
<dbReference type="Gene3D" id="6.10.280.40">
    <property type="match status" value="1"/>
</dbReference>
<dbReference type="Gene3D" id="3.40.50.300">
    <property type="entry name" value="P-loop containing nucleotide triphosphate hydrolases"/>
    <property type="match status" value="1"/>
</dbReference>
<dbReference type="InterPro" id="IPR003593">
    <property type="entry name" value="AAA+_ATPase"/>
</dbReference>
<dbReference type="InterPro" id="IPR025753">
    <property type="entry name" value="AAA_N_dom"/>
</dbReference>
<dbReference type="InterPro" id="IPR003959">
    <property type="entry name" value="ATPase_AAA_core"/>
</dbReference>
<dbReference type="InterPro" id="IPR003960">
    <property type="entry name" value="ATPase_AAA_CS"/>
</dbReference>
<dbReference type="InterPro" id="IPR050747">
    <property type="entry name" value="Mitochondrial_chaperone_BCS1"/>
</dbReference>
<dbReference type="InterPro" id="IPR027417">
    <property type="entry name" value="P-loop_NTPase"/>
</dbReference>
<dbReference type="PANTHER" id="PTHR23070">
    <property type="entry name" value="BCS1 AAA-TYPE ATPASE"/>
    <property type="match status" value="1"/>
</dbReference>
<dbReference type="Pfam" id="PF00004">
    <property type="entry name" value="AAA"/>
    <property type="match status" value="1"/>
</dbReference>
<dbReference type="Pfam" id="PF14363">
    <property type="entry name" value="AAA_assoc"/>
    <property type="match status" value="1"/>
</dbReference>
<dbReference type="SMART" id="SM00382">
    <property type="entry name" value="AAA"/>
    <property type="match status" value="1"/>
</dbReference>
<dbReference type="SUPFAM" id="SSF52540">
    <property type="entry name" value="P-loop containing nucleoside triphosphate hydrolases"/>
    <property type="match status" value="1"/>
</dbReference>
<dbReference type="PROSITE" id="PS00674">
    <property type="entry name" value="AAA"/>
    <property type="match status" value="1"/>
</dbReference>
<evidence type="ECO:0000250" key="1">
    <source>
        <dbReference type="UniProtKB" id="Q9FLD5"/>
    </source>
</evidence>
<evidence type="ECO:0000255" key="2"/>
<evidence type="ECO:0000256" key="3">
    <source>
        <dbReference type="SAM" id="MobiDB-lite"/>
    </source>
</evidence>
<evidence type="ECO:0000305" key="4"/>
<evidence type="ECO:0000312" key="5">
    <source>
        <dbReference type="EMBL" id="AEC06737.1"/>
    </source>
</evidence>
<evidence type="ECO:0000312" key="6">
    <source>
        <dbReference type="EMBL" id="BAC43568.1"/>
    </source>
</evidence>
<reference key="1">
    <citation type="journal article" date="1999" name="Nature">
        <title>Sequence and analysis of chromosome 2 of the plant Arabidopsis thaliana.</title>
        <authorList>
            <person name="Lin X."/>
            <person name="Kaul S."/>
            <person name="Rounsley S.D."/>
            <person name="Shea T.P."/>
            <person name="Benito M.-I."/>
            <person name="Town C.D."/>
            <person name="Fujii C.Y."/>
            <person name="Mason T.M."/>
            <person name="Bowman C.L."/>
            <person name="Barnstead M.E."/>
            <person name="Feldblyum T.V."/>
            <person name="Buell C.R."/>
            <person name="Ketchum K.A."/>
            <person name="Lee J.J."/>
            <person name="Ronning C.M."/>
            <person name="Koo H.L."/>
            <person name="Moffat K.S."/>
            <person name="Cronin L.A."/>
            <person name="Shen M."/>
            <person name="Pai G."/>
            <person name="Van Aken S."/>
            <person name="Umayam L."/>
            <person name="Tallon L.J."/>
            <person name="Gill J.E."/>
            <person name="Adams M.D."/>
            <person name="Carrera A.J."/>
            <person name="Creasy T.H."/>
            <person name="Goodman H.M."/>
            <person name="Somerville C.R."/>
            <person name="Copenhaver G.P."/>
            <person name="Preuss D."/>
            <person name="Nierman W.C."/>
            <person name="White O."/>
            <person name="Eisen J.A."/>
            <person name="Salzberg S.L."/>
            <person name="Fraser C.M."/>
            <person name="Venter J.C."/>
        </authorList>
    </citation>
    <scope>NUCLEOTIDE SEQUENCE [LARGE SCALE GENOMIC DNA]</scope>
    <source>
        <strain>cv. Columbia</strain>
    </source>
</reference>
<reference key="2">
    <citation type="journal article" date="2017" name="Plant J.">
        <title>Araport11: a complete reannotation of the Arabidopsis thaliana reference genome.</title>
        <authorList>
            <person name="Cheng C.Y."/>
            <person name="Krishnakumar V."/>
            <person name="Chan A.P."/>
            <person name="Thibaud-Nissen F."/>
            <person name="Schobel S."/>
            <person name="Town C.D."/>
        </authorList>
    </citation>
    <scope>GENOME REANNOTATION</scope>
    <source>
        <strain>cv. Columbia</strain>
    </source>
</reference>
<reference key="3">
    <citation type="journal article" date="2002" name="Science">
        <title>Functional annotation of a full-length Arabidopsis cDNA collection.</title>
        <authorList>
            <person name="Seki M."/>
            <person name="Narusaka M."/>
            <person name="Kamiya A."/>
            <person name="Ishida J."/>
            <person name="Satou M."/>
            <person name="Sakurai T."/>
            <person name="Nakajima M."/>
            <person name="Enju A."/>
            <person name="Akiyama K."/>
            <person name="Oono Y."/>
            <person name="Muramatsu M."/>
            <person name="Hayashizaki Y."/>
            <person name="Kawai J."/>
            <person name="Carninci P."/>
            <person name="Itoh M."/>
            <person name="Ishii Y."/>
            <person name="Arakawa T."/>
            <person name="Shibata K."/>
            <person name="Shinagawa A."/>
            <person name="Shinozaki K."/>
        </authorList>
    </citation>
    <scope>NUCLEOTIDE SEQUENCE [LARGE SCALE MRNA]</scope>
    <source>
        <strain>cv. Columbia</strain>
    </source>
</reference>
<reference key="4">
    <citation type="submission" date="2004-09" db="EMBL/GenBank/DDBJ databases">
        <title>Large-scale analysis of RIKEN Arabidopsis full-length (RAFL) cDNAs.</title>
        <authorList>
            <person name="Totoki Y."/>
            <person name="Seki M."/>
            <person name="Ishida J."/>
            <person name="Nakajima M."/>
            <person name="Enju A."/>
            <person name="Kamiya A."/>
            <person name="Narusaka M."/>
            <person name="Shin-i T."/>
            <person name="Nakagawa M."/>
            <person name="Sakamoto N."/>
            <person name="Oishi K."/>
            <person name="Kohara Y."/>
            <person name="Kobayashi M."/>
            <person name="Toyoda A."/>
            <person name="Sakaki Y."/>
            <person name="Sakurai T."/>
            <person name="Iida K."/>
            <person name="Akiyama K."/>
            <person name="Satou M."/>
            <person name="Toyoda T."/>
            <person name="Konagaya A."/>
            <person name="Carninci P."/>
            <person name="Kawai J."/>
            <person name="Hayashizaki Y."/>
            <person name="Shinozaki K."/>
        </authorList>
    </citation>
    <scope>NUCLEOTIDE SEQUENCE [LARGE SCALE MRNA]</scope>
    <source>
        <strain>cv. Columbia</strain>
    </source>
</reference>
<reference key="5">
    <citation type="submission" date="2006-08" db="EMBL/GenBank/DDBJ databases">
        <title>Arabidopsis ORF Clones.</title>
        <authorList>
            <person name="Quinitio C."/>
            <person name="Chen H."/>
            <person name="Kim C.J."/>
            <person name="Shinn P."/>
            <person name="Ecker J.R."/>
        </authorList>
    </citation>
    <scope>NUCLEOTIDE SEQUENCE [LARGE SCALE MRNA]</scope>
    <source>
        <strain>cv. Columbia</strain>
    </source>
</reference>
<protein>
    <recommendedName>
        <fullName>AAA-ATPase At2g18193</fullName>
        <ecNumber evidence="1">3.6.1.-</ecNumber>
    </recommendedName>
</protein>